<protein>
    <recommendedName>
        <fullName evidence="1">N-acetylmuramic acid 6-phosphate etherase</fullName>
        <shortName evidence="1">MurNAc-6-P etherase</shortName>
        <ecNumber evidence="1">4.2.1.126</ecNumber>
    </recommendedName>
    <alternativeName>
        <fullName evidence="1">N-acetylmuramic acid 6-phosphate hydrolase</fullName>
    </alternativeName>
    <alternativeName>
        <fullName evidence="1">N-acetylmuramic acid 6-phosphate lyase</fullName>
    </alternativeName>
</protein>
<proteinExistence type="inferred from homology"/>
<keyword id="KW-0119">Carbohydrate metabolism</keyword>
<keyword id="KW-0456">Lyase</keyword>
<accession>B7N618</accession>
<evidence type="ECO:0000255" key="1">
    <source>
        <dbReference type="HAMAP-Rule" id="MF_00068"/>
    </source>
</evidence>
<reference key="1">
    <citation type="journal article" date="2009" name="PLoS Genet.">
        <title>Organised genome dynamics in the Escherichia coli species results in highly diverse adaptive paths.</title>
        <authorList>
            <person name="Touchon M."/>
            <person name="Hoede C."/>
            <person name="Tenaillon O."/>
            <person name="Barbe V."/>
            <person name="Baeriswyl S."/>
            <person name="Bidet P."/>
            <person name="Bingen E."/>
            <person name="Bonacorsi S."/>
            <person name="Bouchier C."/>
            <person name="Bouvet O."/>
            <person name="Calteau A."/>
            <person name="Chiapello H."/>
            <person name="Clermont O."/>
            <person name="Cruveiller S."/>
            <person name="Danchin A."/>
            <person name="Diard M."/>
            <person name="Dossat C."/>
            <person name="Karoui M.E."/>
            <person name="Frapy E."/>
            <person name="Garry L."/>
            <person name="Ghigo J.M."/>
            <person name="Gilles A.M."/>
            <person name="Johnson J."/>
            <person name="Le Bouguenec C."/>
            <person name="Lescat M."/>
            <person name="Mangenot S."/>
            <person name="Martinez-Jehanne V."/>
            <person name="Matic I."/>
            <person name="Nassif X."/>
            <person name="Oztas S."/>
            <person name="Petit M.A."/>
            <person name="Pichon C."/>
            <person name="Rouy Z."/>
            <person name="Ruf C.S."/>
            <person name="Schneider D."/>
            <person name="Tourret J."/>
            <person name="Vacherie B."/>
            <person name="Vallenet D."/>
            <person name="Medigue C."/>
            <person name="Rocha E.P.C."/>
            <person name="Denamur E."/>
        </authorList>
    </citation>
    <scope>NUCLEOTIDE SEQUENCE [LARGE SCALE GENOMIC DNA]</scope>
    <source>
        <strain>UMN026 / ExPEC</strain>
    </source>
</reference>
<name>MURQ_ECOLU</name>
<sequence>MQLEKMITEGSNAASAEIDRVSTLEMCRIINDEDKTVPLAVERVLPDIAAAIDVIHAQVSGGGRLIYLGAGTSGRLGILDASECPPTYGVKPGLVVGLIAGGEYAIQHAVEGAEDSREGGVNDLKNIGLTAQDVVVGIAASGRTPYVIAGLEYARQLGCRTVGISCNPGSAVSTTAEFAITPVVGAEVVTGSSRMKAGTAQKLVLNMLSTGLMIKSGKVFGNLMVDVVATNEKLHVRQVNIVKNATGCSAEQAEAALVACERNCKTAIVMVLKNLDAAEAKKRLDQHGGFIRQVLDKE</sequence>
<feature type="chain" id="PRO_1000116995" description="N-acetylmuramic acid 6-phosphate etherase">
    <location>
        <begin position="1"/>
        <end position="298"/>
    </location>
</feature>
<feature type="domain" description="SIS" evidence="1">
    <location>
        <begin position="55"/>
        <end position="218"/>
    </location>
</feature>
<feature type="active site" description="Proton donor" evidence="1">
    <location>
        <position position="83"/>
    </location>
</feature>
<feature type="active site" evidence="1">
    <location>
        <position position="114"/>
    </location>
</feature>
<dbReference type="EC" id="4.2.1.126" evidence="1"/>
<dbReference type="EMBL" id="CU928163">
    <property type="protein sequence ID" value="CAR13927.1"/>
    <property type="molecule type" value="Genomic_DNA"/>
</dbReference>
<dbReference type="RefSeq" id="WP_001175617.1">
    <property type="nucleotide sequence ID" value="NC_011751.1"/>
</dbReference>
<dbReference type="RefSeq" id="YP_002413454.1">
    <property type="nucleotide sequence ID" value="NC_011751.1"/>
</dbReference>
<dbReference type="SMR" id="B7N618"/>
<dbReference type="STRING" id="585056.ECUMN_2749"/>
<dbReference type="KEGG" id="eum:ECUMN_2749"/>
<dbReference type="PATRIC" id="fig|585056.7.peg.2930"/>
<dbReference type="HOGENOM" id="CLU_049049_1_1_6"/>
<dbReference type="UniPathway" id="UPA00342"/>
<dbReference type="UniPathway" id="UPA00343"/>
<dbReference type="UniPathway" id="UPA00544"/>
<dbReference type="Proteomes" id="UP000007097">
    <property type="component" value="Chromosome"/>
</dbReference>
<dbReference type="GO" id="GO:0097367">
    <property type="term" value="F:carbohydrate derivative binding"/>
    <property type="evidence" value="ECO:0007669"/>
    <property type="project" value="InterPro"/>
</dbReference>
<dbReference type="GO" id="GO:0016835">
    <property type="term" value="F:carbon-oxygen lyase activity"/>
    <property type="evidence" value="ECO:0007669"/>
    <property type="project" value="UniProtKB-UniRule"/>
</dbReference>
<dbReference type="GO" id="GO:0016803">
    <property type="term" value="F:ether hydrolase activity"/>
    <property type="evidence" value="ECO:0007669"/>
    <property type="project" value="TreeGrafter"/>
</dbReference>
<dbReference type="GO" id="GO:0097175">
    <property type="term" value="P:1,6-anhydro-N-acetyl-beta-muramic acid catabolic process"/>
    <property type="evidence" value="ECO:0007669"/>
    <property type="project" value="UniProtKB-UniRule"/>
</dbReference>
<dbReference type="GO" id="GO:0046348">
    <property type="term" value="P:amino sugar catabolic process"/>
    <property type="evidence" value="ECO:0007669"/>
    <property type="project" value="InterPro"/>
</dbReference>
<dbReference type="GO" id="GO:0097173">
    <property type="term" value="P:N-acetylmuramic acid catabolic process"/>
    <property type="evidence" value="ECO:0007669"/>
    <property type="project" value="UniProtKB-UniPathway"/>
</dbReference>
<dbReference type="GO" id="GO:0009254">
    <property type="term" value="P:peptidoglycan turnover"/>
    <property type="evidence" value="ECO:0007669"/>
    <property type="project" value="UniProtKB-UniRule"/>
</dbReference>
<dbReference type="CDD" id="cd05007">
    <property type="entry name" value="SIS_Etherase"/>
    <property type="match status" value="1"/>
</dbReference>
<dbReference type="FunFam" id="1.10.8.1080:FF:000001">
    <property type="entry name" value="N-acetylmuramic acid 6-phosphate etherase"/>
    <property type="match status" value="1"/>
</dbReference>
<dbReference type="FunFam" id="3.40.50.10490:FF:000014">
    <property type="entry name" value="N-acetylmuramic acid 6-phosphate etherase"/>
    <property type="match status" value="1"/>
</dbReference>
<dbReference type="Gene3D" id="1.10.8.1080">
    <property type="match status" value="1"/>
</dbReference>
<dbReference type="Gene3D" id="3.40.50.10490">
    <property type="entry name" value="Glucose-6-phosphate isomerase like protein, domain 1"/>
    <property type="match status" value="1"/>
</dbReference>
<dbReference type="HAMAP" id="MF_00068">
    <property type="entry name" value="MurQ"/>
    <property type="match status" value="1"/>
</dbReference>
<dbReference type="InterPro" id="IPR005488">
    <property type="entry name" value="Etherase_MurQ"/>
</dbReference>
<dbReference type="InterPro" id="IPR005486">
    <property type="entry name" value="Glucokinase_regulatory_CS"/>
</dbReference>
<dbReference type="InterPro" id="IPR040190">
    <property type="entry name" value="MURQ/GCKR"/>
</dbReference>
<dbReference type="InterPro" id="IPR001347">
    <property type="entry name" value="SIS_dom"/>
</dbReference>
<dbReference type="InterPro" id="IPR046348">
    <property type="entry name" value="SIS_dom_sf"/>
</dbReference>
<dbReference type="NCBIfam" id="TIGR00274">
    <property type="entry name" value="N-acetylmuramic acid 6-phosphate etherase"/>
    <property type="match status" value="1"/>
</dbReference>
<dbReference type="NCBIfam" id="NF003915">
    <property type="entry name" value="PRK05441.1"/>
    <property type="match status" value="1"/>
</dbReference>
<dbReference type="NCBIfam" id="NF009222">
    <property type="entry name" value="PRK12570.1"/>
    <property type="match status" value="1"/>
</dbReference>
<dbReference type="PANTHER" id="PTHR10088">
    <property type="entry name" value="GLUCOKINASE REGULATORY PROTEIN"/>
    <property type="match status" value="1"/>
</dbReference>
<dbReference type="PANTHER" id="PTHR10088:SF4">
    <property type="entry name" value="GLUCOKINASE REGULATORY PROTEIN"/>
    <property type="match status" value="1"/>
</dbReference>
<dbReference type="Pfam" id="PF20741">
    <property type="entry name" value="GKRP-like_C"/>
    <property type="match status" value="1"/>
</dbReference>
<dbReference type="Pfam" id="PF22645">
    <property type="entry name" value="GKRP_SIS_N"/>
    <property type="match status" value="1"/>
</dbReference>
<dbReference type="SUPFAM" id="SSF53697">
    <property type="entry name" value="SIS domain"/>
    <property type="match status" value="1"/>
</dbReference>
<dbReference type="PROSITE" id="PS01272">
    <property type="entry name" value="GCKR"/>
    <property type="match status" value="1"/>
</dbReference>
<dbReference type="PROSITE" id="PS51464">
    <property type="entry name" value="SIS"/>
    <property type="match status" value="1"/>
</dbReference>
<organism>
    <name type="scientific">Escherichia coli O17:K52:H18 (strain UMN026 / ExPEC)</name>
    <dbReference type="NCBI Taxonomy" id="585056"/>
    <lineage>
        <taxon>Bacteria</taxon>
        <taxon>Pseudomonadati</taxon>
        <taxon>Pseudomonadota</taxon>
        <taxon>Gammaproteobacteria</taxon>
        <taxon>Enterobacterales</taxon>
        <taxon>Enterobacteriaceae</taxon>
        <taxon>Escherichia</taxon>
    </lineage>
</organism>
<gene>
    <name evidence="1" type="primary">murQ</name>
    <name type="ordered locus">ECUMN_2749</name>
</gene>
<comment type="function">
    <text evidence="1">Specifically catalyzes the cleavage of the D-lactyl ether substituent of MurNAc 6-phosphate, producing GlcNAc 6-phosphate and D-lactate. Together with AnmK, is also required for the utilization of anhydro-N-acetylmuramic acid (anhMurNAc) either imported from the medium or derived from its own cell wall murein, and thus plays a role in cell wall recycling.</text>
</comment>
<comment type="catalytic activity">
    <reaction evidence="1">
        <text>N-acetyl-D-muramate 6-phosphate + H2O = N-acetyl-D-glucosamine 6-phosphate + (R)-lactate</text>
        <dbReference type="Rhea" id="RHEA:26410"/>
        <dbReference type="ChEBI" id="CHEBI:15377"/>
        <dbReference type="ChEBI" id="CHEBI:16004"/>
        <dbReference type="ChEBI" id="CHEBI:57513"/>
        <dbReference type="ChEBI" id="CHEBI:58722"/>
        <dbReference type="EC" id="4.2.1.126"/>
    </reaction>
</comment>
<comment type="pathway">
    <text evidence="1">Amino-sugar metabolism; 1,6-anhydro-N-acetylmuramate degradation.</text>
</comment>
<comment type="pathway">
    <text evidence="1">Amino-sugar metabolism; N-acetylmuramate degradation.</text>
</comment>
<comment type="pathway">
    <text evidence="1">Cell wall biogenesis; peptidoglycan recycling.</text>
</comment>
<comment type="subunit">
    <text evidence="1">Homodimer.</text>
</comment>
<comment type="induction">
    <text evidence="1">Induced by MurNAc 6-phosphate that releases the repressor MurR from the DNA. Repressed by MurR in the absence of MurNAc 6-phosphate.</text>
</comment>
<comment type="miscellaneous">
    <text evidence="1">A lyase-type mechanism (elimination/hydration) is suggested for the cleavage of the lactyl ether bond of MurNAc 6-phosphate, with the formation of an alpha,beta-unsaturated aldehyde intermediate with (E)-stereochemistry, followed by the syn addition of water to give product.</text>
</comment>
<comment type="similarity">
    <text evidence="1">Belongs to the GCKR-like family. MurNAc-6-P etherase subfamily.</text>
</comment>